<evidence type="ECO:0000250" key="1"/>
<evidence type="ECO:0000255" key="2">
    <source>
        <dbReference type="PROSITE-ProRule" id="PRU01364"/>
    </source>
</evidence>
<evidence type="ECO:0000256" key="3">
    <source>
        <dbReference type="SAM" id="MobiDB-lite"/>
    </source>
</evidence>
<evidence type="ECO:0000305" key="4"/>
<organismHost>
    <name type="scientific">Avena sativa</name>
    <name type="common">Oat</name>
    <dbReference type="NCBI Taxonomy" id="4498"/>
</organismHost>
<organismHost>
    <name type="scientific">Axonopus compressus</name>
    <dbReference type="NCBI Taxonomy" id="217170"/>
</organismHost>
<organismHost>
    <name type="scientific">Cenchrus americanus</name>
    <name type="common">Pearl millet</name>
    <name type="synonym">Pennisetum glaucum</name>
    <dbReference type="NCBI Taxonomy" id="4543"/>
</organismHost>
<organismHost>
    <name type="scientific">Cenchrus polystachios</name>
    <dbReference type="NCBI Taxonomy" id="281129"/>
</organismHost>
<organismHost>
    <name type="scientific">Coix lacryma-jobi</name>
    <name type="common">Job's tears</name>
    <dbReference type="NCBI Taxonomy" id="4505"/>
</organismHost>
<organismHost>
    <name type="scientific">Dactyloctenium aegyptium</name>
    <dbReference type="NCBI Taxonomy" id="270102"/>
</organismHost>
<organismHost>
    <name type="scientific">Digitaria</name>
    <dbReference type="NCBI Taxonomy" id="66017"/>
</organismHost>
<organismHost>
    <name type="scientific">Echinochloa colona</name>
    <dbReference type="NCBI Taxonomy" id="90396"/>
</organismHost>
<organismHost>
    <name type="scientific">Eleusine coracana</name>
    <name type="common">Indian finger millet</name>
    <name type="synonym">Ragi</name>
    <dbReference type="NCBI Taxonomy" id="4511"/>
</organismHost>
<organismHost>
    <name type="scientific">Eleusine indica</name>
    <name type="common">Goosegrass</name>
    <name type="synonym">Cynosurus indicus</name>
    <dbReference type="NCBI Taxonomy" id="29674"/>
</organismHost>
<organismHost>
    <name type="scientific">Hordeum vulgare</name>
    <name type="common">Barley</name>
    <dbReference type="NCBI Taxonomy" id="4513"/>
</organismHost>
<organismHost>
    <name type="scientific">Megathyrsus maximus</name>
    <dbReference type="NCBI Taxonomy" id="59788"/>
</organismHost>
<organismHost>
    <name type="scientific">Melinis repens</name>
    <name type="common">Red Natal grass</name>
    <name type="synonym">Rhynchelytrum repens</name>
    <dbReference type="NCBI Taxonomy" id="29709"/>
</organismHost>
<organismHost>
    <name type="scientific">Oryza glaberrima</name>
    <name type="common">African rice</name>
    <dbReference type="NCBI Taxonomy" id="4538"/>
</organismHost>
<organismHost>
    <name type="scientific">Oryza sativa</name>
    <name type="common">Rice</name>
    <dbReference type="NCBI Taxonomy" id="4530"/>
</organismHost>
<organismHost>
    <name type="scientific">Paspalum conjugatum</name>
    <name type="common">Hilo grass</name>
    <dbReference type="NCBI Taxonomy" id="158143"/>
</organismHost>
<organismHost>
    <name type="scientific">Paspalum notatum</name>
    <name type="common">Bahia grass</name>
    <dbReference type="NCBI Taxonomy" id="147272"/>
</organismHost>
<organismHost>
    <name type="scientific">Paspalum scrobiculatum</name>
    <dbReference type="NCBI Taxonomy" id="173849"/>
</organismHost>
<organismHost>
    <name type="scientific">Rottboellia cochinchinensis</name>
    <dbReference type="NCBI Taxonomy" id="300125"/>
</organismHost>
<organismHost>
    <name type="scientific">Saccharum officinarum</name>
    <name type="common">Sugarcane</name>
    <dbReference type="NCBI Taxonomy" id="4547"/>
</organismHost>
<organismHost>
    <name type="scientific">Setaria barbata</name>
    <dbReference type="NCBI Taxonomy" id="192628"/>
</organismHost>
<organismHost>
    <name type="scientific">Triticum aestivum</name>
    <name type="common">Wheat</name>
    <dbReference type="NCBI Taxonomy" id="4565"/>
</organismHost>
<organismHost>
    <name type="scientific">Urochloa deflexa</name>
    <dbReference type="NCBI Taxonomy" id="240436"/>
</organismHost>
<organismHost>
    <name type="scientific">Zea mays</name>
    <name type="common">Maize</name>
    <dbReference type="NCBI Taxonomy" id="4577"/>
</organismHost>
<organism>
    <name type="scientific">Maize streak virus genotype D (isolate Raw)</name>
    <name type="common">MSV</name>
    <dbReference type="NCBI Taxonomy" id="268343"/>
    <lineage>
        <taxon>Viruses</taxon>
        <taxon>Monodnaviria</taxon>
        <taxon>Shotokuvirae</taxon>
        <taxon>Cressdnaviricota</taxon>
        <taxon>Repensiviricetes</taxon>
        <taxon>Geplafuvirales</taxon>
        <taxon>Geminiviridae</taxon>
        <taxon>Mastrevirus</taxon>
        <taxon>Maize streak virus</taxon>
    </lineage>
</organism>
<proteinExistence type="inferred from homology"/>
<reference key="1">
    <citation type="journal article" date="2001" name="Virology">
        <title>Sequence diversity and virulence in Zea mays of Maize streak virus isolates.</title>
        <authorList>
            <person name="Martin D.P."/>
            <person name="Willment J.A."/>
            <person name="Billharz R."/>
            <person name="Velders R."/>
            <person name="Odhiambo B."/>
            <person name="Njuguna J."/>
            <person name="James D."/>
            <person name="Rybicki E.P."/>
        </authorList>
    </citation>
    <scope>NUCLEOTIDE SEQUENCE [GENOMIC DNA]</scope>
</reference>
<reference key="2">
    <citation type="journal article" date="2001" name="J. Virol. Methods">
        <title>Analysis of the diversity of African streak mastreviruses using PCR-generated RFLPs and partial sequence data.</title>
        <authorList>
            <person name="Willment J.A."/>
            <person name="Martin D.P."/>
            <person name="Rybicki E.P."/>
        </authorList>
    </citation>
    <scope>NUCLEOTIDE SEQUENCE [GENOMIC DNA] OF 1-261</scope>
</reference>
<keyword id="KW-0010">Activator</keyword>
<keyword id="KW-0025">Alternative splicing</keyword>
<keyword id="KW-0190">Covalent protein-DNA linkage</keyword>
<keyword id="KW-0235">DNA replication</keyword>
<keyword id="KW-0238">DNA-binding</keyword>
<keyword id="KW-0255">Endonuclease</keyword>
<keyword id="KW-1078">G1/S host cell cycle checkpoint dysregulation by virus</keyword>
<keyword id="KW-1035">Host cytoplasm</keyword>
<keyword id="KW-1048">Host nucleus</keyword>
<keyword id="KW-0945">Host-virus interaction</keyword>
<keyword id="KW-0378">Hydrolase</keyword>
<keyword id="KW-0479">Metal-binding</keyword>
<keyword id="KW-1121">Modulation of host cell cycle by virus</keyword>
<keyword id="KW-0540">Nuclease</keyword>
<keyword id="KW-0547">Nucleotide-binding</keyword>
<keyword id="KW-0548">Nucleotidyltransferase</keyword>
<keyword id="KW-1185">Reference proteome</keyword>
<keyword id="KW-0678">Repressor</keyword>
<keyword id="KW-0808">Transferase</keyword>
<feature type="chain" id="PRO_0000316937" description="Replication-associated protein A">
    <location>
        <begin position="1"/>
        <end position="272"/>
    </location>
</feature>
<feature type="domain" description="CRESS-DNA virus Rep endonuclease" evidence="2">
    <location>
        <begin position="11"/>
        <end position="114"/>
    </location>
</feature>
<feature type="region of interest" description="Oligomerization" evidence="1">
    <location>
        <begin position="175"/>
        <end position="187"/>
    </location>
</feature>
<feature type="region of interest" description="Binding to RBR1" evidence="1">
    <location>
        <begin position="198"/>
        <end position="202"/>
    </location>
</feature>
<feature type="region of interest" description="Transactivation" evidence="1">
    <location>
        <begin position="221"/>
        <end position="230"/>
    </location>
</feature>
<feature type="region of interest" description="Disordered" evidence="3">
    <location>
        <begin position="250"/>
        <end position="272"/>
    </location>
</feature>
<feature type="short sequence motif" description="RCR-1" evidence="2">
    <location>
        <begin position="18"/>
        <end position="21"/>
    </location>
</feature>
<feature type="short sequence motif" description="RCR-2" evidence="2">
    <location>
        <begin position="60"/>
        <end position="62"/>
    </location>
</feature>
<feature type="short sequence motif" description="RCR-3" evidence="2">
    <location>
        <begin position="100"/>
        <end position="103"/>
    </location>
</feature>
<feature type="compositionally biased region" description="Polar residues" evidence="3">
    <location>
        <begin position="250"/>
        <end position="265"/>
    </location>
</feature>
<feature type="active site" description="For DNA cleavage activity" evidence="2">
    <location>
        <position position="100"/>
    </location>
</feature>
<feature type="binding site" evidence="2">
    <location>
        <position position="52"/>
    </location>
    <ligand>
        <name>a divalent metal cation</name>
        <dbReference type="ChEBI" id="CHEBI:60240"/>
    </ligand>
</feature>
<feature type="binding site" evidence="2">
    <location>
        <position position="60"/>
    </location>
    <ligand>
        <name>a divalent metal cation</name>
        <dbReference type="ChEBI" id="CHEBI:60240"/>
    </ligand>
</feature>
<feature type="binding site" evidence="2">
    <location>
        <position position="62"/>
    </location>
    <ligand>
        <name>a divalent metal cation</name>
        <dbReference type="ChEBI" id="CHEBI:60240"/>
    </ligand>
</feature>
<feature type="binding site" evidence="2">
    <location>
        <position position="104"/>
    </location>
    <ligand>
        <name>a divalent metal cation</name>
        <dbReference type="ChEBI" id="CHEBI:60240"/>
    </ligand>
</feature>
<accession>Q91MF7</accession>
<accession>Q9YPX9</accession>
<dbReference type="EC" id="3.1.21.-"/>
<dbReference type="EMBL" id="AF329889">
    <property type="protein sequence ID" value="AAK73473.1"/>
    <property type="molecule type" value="Genomic_DNA"/>
</dbReference>
<dbReference type="EMBL" id="AJ012639">
    <property type="protein sequence ID" value="CAA10092.1"/>
    <property type="molecule type" value="Genomic_DNA"/>
</dbReference>
<dbReference type="SMR" id="Q91MF7"/>
<dbReference type="Proteomes" id="UP000007781">
    <property type="component" value="Genome"/>
</dbReference>
<dbReference type="GO" id="GO:0030430">
    <property type="term" value="C:host cell cytoplasm"/>
    <property type="evidence" value="ECO:0007669"/>
    <property type="project" value="UniProtKB-SubCell"/>
</dbReference>
<dbReference type="GO" id="GO:0042025">
    <property type="term" value="C:host cell nucleus"/>
    <property type="evidence" value="ECO:0007669"/>
    <property type="project" value="UniProtKB-SubCell"/>
</dbReference>
<dbReference type="GO" id="GO:0003677">
    <property type="term" value="F:DNA binding"/>
    <property type="evidence" value="ECO:0007669"/>
    <property type="project" value="UniProtKB-KW"/>
</dbReference>
<dbReference type="GO" id="GO:0016888">
    <property type="term" value="F:endodeoxyribonuclease activity, producing 5'-phosphomonoesters"/>
    <property type="evidence" value="ECO:0007669"/>
    <property type="project" value="InterPro"/>
</dbReference>
<dbReference type="GO" id="GO:0046872">
    <property type="term" value="F:metal ion binding"/>
    <property type="evidence" value="ECO:0007669"/>
    <property type="project" value="UniProtKB-KW"/>
</dbReference>
<dbReference type="GO" id="GO:0000166">
    <property type="term" value="F:nucleotide binding"/>
    <property type="evidence" value="ECO:0007669"/>
    <property type="project" value="UniProtKB-KW"/>
</dbReference>
<dbReference type="GO" id="GO:0016779">
    <property type="term" value="F:nucleotidyltransferase activity"/>
    <property type="evidence" value="ECO:0007669"/>
    <property type="project" value="UniProtKB-KW"/>
</dbReference>
<dbReference type="GO" id="GO:0005198">
    <property type="term" value="F:structural molecule activity"/>
    <property type="evidence" value="ECO:0007669"/>
    <property type="project" value="InterPro"/>
</dbReference>
<dbReference type="GO" id="GO:0006260">
    <property type="term" value="P:DNA replication"/>
    <property type="evidence" value="ECO:0007669"/>
    <property type="project" value="UniProtKB-KW"/>
</dbReference>
<dbReference type="GO" id="GO:0039645">
    <property type="term" value="P:symbiont-mediated perturbation of host cell cycle G1/S transition checkpoint"/>
    <property type="evidence" value="ECO:0007669"/>
    <property type="project" value="UniProtKB-KW"/>
</dbReference>
<dbReference type="Gene3D" id="3.40.1310.20">
    <property type="match status" value="1"/>
</dbReference>
<dbReference type="InterPro" id="IPR049912">
    <property type="entry name" value="CRESS_DNA_REP"/>
</dbReference>
<dbReference type="InterPro" id="IPR001146">
    <property type="entry name" value="Gemini_AL1_MSV"/>
</dbReference>
<dbReference type="InterPro" id="IPR001191">
    <property type="entry name" value="Gemini_AL1_REP"/>
</dbReference>
<dbReference type="InterPro" id="IPR022692">
    <property type="entry name" value="Gemini_AL1_REP_central"/>
</dbReference>
<dbReference type="Pfam" id="PF00799">
    <property type="entry name" value="Gemini_AL1"/>
    <property type="match status" value="1"/>
</dbReference>
<dbReference type="Pfam" id="PF08283">
    <property type="entry name" value="Gemini_AL1_M"/>
    <property type="match status" value="1"/>
</dbReference>
<dbReference type="PRINTS" id="PR00227">
    <property type="entry name" value="GEMCOATAL1"/>
</dbReference>
<dbReference type="PRINTS" id="PR00229">
    <property type="entry name" value="GEMCOATMSVL1"/>
</dbReference>
<dbReference type="SUPFAM" id="SSF55464">
    <property type="entry name" value="Origin of replication-binding domain, RBD-like"/>
    <property type="match status" value="1"/>
</dbReference>
<dbReference type="PROSITE" id="PS52020">
    <property type="entry name" value="CRESS_DNA_REP"/>
    <property type="match status" value="1"/>
</dbReference>
<gene>
    <name type="ORF">C1</name>
</gene>
<protein>
    <recommendedName>
        <fullName>Replication-associated protein A</fullName>
        <shortName>RepA</shortName>
        <ecNumber>3.1.21.-</ecNumber>
    </recommendedName>
</protein>
<sequence length="272" mass="31396">MTSSSSNRQFLHRTANTFLTYPQCPEHPEIISQRIWDLVGRWNPLYIICAQEAHEDGNMHLHALIQTDKQVRTTDSRFFDIDGFHPNIQSAMSPNKVRDYILKEPLALFERGTFVPRKKTFLGNSSKGNSEKKPSKDEIMQDIISHATSKPEYLSMVRKSFPYDWATKLQYFEYSANKLFPDIQEEFINPHPTSEPDLLCNESIKDWLQPNIYQVSPQAYMLLQPNCYTVDDAISDLQWLDDLTSKQIMDQESRASTSSVQQGQENLLGPEA</sequence>
<comment type="function">
    <text evidence="1">Implicated in enhancement of V-sense gene expression. Acts a an inhibitor of C-sense gene transcription (By similarity).</text>
</comment>
<comment type="cofactor">
    <cofactor evidence="2">
        <name>Mg(2+)</name>
        <dbReference type="ChEBI" id="CHEBI:18420"/>
    </cofactor>
    <cofactor evidence="2">
        <name>Mn(2+)</name>
        <dbReference type="ChEBI" id="CHEBI:29035"/>
    </cofactor>
    <text evidence="2">Divalent metal cations, possibly Mg(2+) or Mn(2+).</text>
</comment>
<comment type="subunit">
    <text evidence="1">Homooligomer. Interacts with host retinoblastoma-related protein 1 (RBR1), and may thereby deregulate the host cell cycle. Part of the C- and V-complexes which are RepA-Rep-DNA complexes involved in the c-sense and v-sense transcription (By similarity).</text>
</comment>
<comment type="subcellular location">
    <subcellularLocation>
        <location evidence="1">Host nucleus</location>
    </subcellularLocation>
    <subcellularLocation>
        <location evidence="1">Host cytoplasm</location>
    </subcellularLocation>
</comment>
<comment type="alternative products">
    <event type="alternative splicing"/>
    <isoform>
        <id>Q91MF7-1</id>
        <name>RepA</name>
        <sequence type="displayed"/>
    </isoform>
    <isoform>
        <id>Q91MF8-1</id>
        <name>Rep</name>
        <sequence type="external"/>
    </isoform>
</comment>
<comment type="domain">
    <text>There are 3 rolling circle replication (RCR) motifs. RCR-2 may be involved in metal coordination. RCR-3 is required for phosphodiester bond cleavage for initiation of RCR.</text>
</comment>
<comment type="miscellaneous">
    <molecule>Isoform RepA</molecule>
    <text>Produced from the unspliced transcript.</text>
</comment>
<comment type="similarity">
    <text evidence="4">Belongs to the geminiviridae Rep protein family.</text>
</comment>
<name>REPA_MSVRA</name>